<keyword id="KW-0963">Cytoplasm</keyword>
<keyword id="KW-0378">Hydrolase</keyword>
<proteinExistence type="inferred from homology"/>
<gene>
    <name evidence="1" type="primary">ureA</name>
    <name type="ordered locus">SAR2372</name>
</gene>
<dbReference type="EC" id="3.5.1.5" evidence="1"/>
<dbReference type="EMBL" id="BX571856">
    <property type="protein sequence ID" value="CAG41353.1"/>
    <property type="molecule type" value="Genomic_DNA"/>
</dbReference>
<dbReference type="RefSeq" id="WP_000545928.1">
    <property type="nucleotide sequence ID" value="NC_002952.2"/>
</dbReference>
<dbReference type="SMR" id="Q6GEE6"/>
<dbReference type="KEGG" id="sar:SAR2372"/>
<dbReference type="HOGENOM" id="CLU_145825_1_0_9"/>
<dbReference type="UniPathway" id="UPA00258">
    <property type="reaction ID" value="UER00370"/>
</dbReference>
<dbReference type="Proteomes" id="UP000000596">
    <property type="component" value="Chromosome"/>
</dbReference>
<dbReference type="GO" id="GO:0005737">
    <property type="term" value="C:cytoplasm"/>
    <property type="evidence" value="ECO:0007669"/>
    <property type="project" value="UniProtKB-SubCell"/>
</dbReference>
<dbReference type="GO" id="GO:0016151">
    <property type="term" value="F:nickel cation binding"/>
    <property type="evidence" value="ECO:0007669"/>
    <property type="project" value="InterPro"/>
</dbReference>
<dbReference type="GO" id="GO:0009039">
    <property type="term" value="F:urease activity"/>
    <property type="evidence" value="ECO:0007669"/>
    <property type="project" value="UniProtKB-UniRule"/>
</dbReference>
<dbReference type="GO" id="GO:0043419">
    <property type="term" value="P:urea catabolic process"/>
    <property type="evidence" value="ECO:0007669"/>
    <property type="project" value="UniProtKB-UniRule"/>
</dbReference>
<dbReference type="CDD" id="cd00390">
    <property type="entry name" value="Urease_gamma"/>
    <property type="match status" value="1"/>
</dbReference>
<dbReference type="Gene3D" id="3.30.280.10">
    <property type="entry name" value="Urease, gamma-like subunit"/>
    <property type="match status" value="1"/>
</dbReference>
<dbReference type="HAMAP" id="MF_00739">
    <property type="entry name" value="Urease_gamma"/>
    <property type="match status" value="1"/>
</dbReference>
<dbReference type="InterPro" id="IPR012010">
    <property type="entry name" value="Urease_gamma"/>
</dbReference>
<dbReference type="InterPro" id="IPR002026">
    <property type="entry name" value="Urease_gamma/gamma-beta_su"/>
</dbReference>
<dbReference type="InterPro" id="IPR036463">
    <property type="entry name" value="Urease_gamma_sf"/>
</dbReference>
<dbReference type="InterPro" id="IPR050069">
    <property type="entry name" value="Urease_subunit"/>
</dbReference>
<dbReference type="NCBIfam" id="NF009712">
    <property type="entry name" value="PRK13241.1"/>
    <property type="match status" value="1"/>
</dbReference>
<dbReference type="NCBIfam" id="TIGR00193">
    <property type="entry name" value="urease_gam"/>
    <property type="match status" value="1"/>
</dbReference>
<dbReference type="PANTHER" id="PTHR33569">
    <property type="entry name" value="UREASE"/>
    <property type="match status" value="1"/>
</dbReference>
<dbReference type="PANTHER" id="PTHR33569:SF1">
    <property type="entry name" value="UREASE"/>
    <property type="match status" value="1"/>
</dbReference>
<dbReference type="Pfam" id="PF00547">
    <property type="entry name" value="Urease_gamma"/>
    <property type="match status" value="1"/>
</dbReference>
<dbReference type="PIRSF" id="PIRSF001223">
    <property type="entry name" value="Urease_gamma"/>
    <property type="match status" value="1"/>
</dbReference>
<dbReference type="SUPFAM" id="SSF54111">
    <property type="entry name" value="Urease, gamma-subunit"/>
    <property type="match status" value="1"/>
</dbReference>
<name>URE3_STAAR</name>
<comment type="catalytic activity">
    <reaction evidence="1">
        <text>urea + 2 H2O + H(+) = hydrogencarbonate + 2 NH4(+)</text>
        <dbReference type="Rhea" id="RHEA:20557"/>
        <dbReference type="ChEBI" id="CHEBI:15377"/>
        <dbReference type="ChEBI" id="CHEBI:15378"/>
        <dbReference type="ChEBI" id="CHEBI:16199"/>
        <dbReference type="ChEBI" id="CHEBI:17544"/>
        <dbReference type="ChEBI" id="CHEBI:28938"/>
        <dbReference type="EC" id="3.5.1.5"/>
    </reaction>
</comment>
<comment type="pathway">
    <text evidence="1">Nitrogen metabolism; urea degradation; CO(2) and NH(3) from urea (urease route): step 1/1.</text>
</comment>
<comment type="subunit">
    <text evidence="1">Heterotrimer of UreA (gamma), UreB (beta) and UreC (alpha) subunits. Three heterotrimers associate to form the active enzyme.</text>
</comment>
<comment type="subcellular location">
    <subcellularLocation>
        <location evidence="1">Cytoplasm</location>
    </subcellularLocation>
</comment>
<comment type="similarity">
    <text evidence="1">Belongs to the urease gamma subunit family.</text>
</comment>
<reference key="1">
    <citation type="journal article" date="2004" name="Proc. Natl. Acad. Sci. U.S.A.">
        <title>Complete genomes of two clinical Staphylococcus aureus strains: evidence for the rapid evolution of virulence and drug resistance.</title>
        <authorList>
            <person name="Holden M.T.G."/>
            <person name="Feil E.J."/>
            <person name="Lindsay J.A."/>
            <person name="Peacock S.J."/>
            <person name="Day N.P.J."/>
            <person name="Enright M.C."/>
            <person name="Foster T.J."/>
            <person name="Moore C.E."/>
            <person name="Hurst L."/>
            <person name="Atkin R."/>
            <person name="Barron A."/>
            <person name="Bason N."/>
            <person name="Bentley S.D."/>
            <person name="Chillingworth C."/>
            <person name="Chillingworth T."/>
            <person name="Churcher C."/>
            <person name="Clark L."/>
            <person name="Corton C."/>
            <person name="Cronin A."/>
            <person name="Doggett J."/>
            <person name="Dowd L."/>
            <person name="Feltwell T."/>
            <person name="Hance Z."/>
            <person name="Harris B."/>
            <person name="Hauser H."/>
            <person name="Holroyd S."/>
            <person name="Jagels K."/>
            <person name="James K.D."/>
            <person name="Lennard N."/>
            <person name="Line A."/>
            <person name="Mayes R."/>
            <person name="Moule S."/>
            <person name="Mungall K."/>
            <person name="Ormond D."/>
            <person name="Quail M.A."/>
            <person name="Rabbinowitsch E."/>
            <person name="Rutherford K.M."/>
            <person name="Sanders M."/>
            <person name="Sharp S."/>
            <person name="Simmonds M."/>
            <person name="Stevens K."/>
            <person name="Whitehead S."/>
            <person name="Barrell B.G."/>
            <person name="Spratt B.G."/>
            <person name="Parkhill J."/>
        </authorList>
    </citation>
    <scope>NUCLEOTIDE SEQUENCE [LARGE SCALE GENOMIC DNA]</scope>
    <source>
        <strain>MRSA252</strain>
    </source>
</reference>
<feature type="chain" id="PRO_0000098041" description="Urease subunit gamma">
    <location>
        <begin position="1"/>
        <end position="100"/>
    </location>
</feature>
<sequence>MHFTQREQDKLMIVVAAEVARRRKARGLKLNHPEALALISDELLEGARDGKTVAELMSYGRQILNKEDVMDGVEHMITDIEIEATFPDGTKLITVHHPIV</sequence>
<evidence type="ECO:0000255" key="1">
    <source>
        <dbReference type="HAMAP-Rule" id="MF_00739"/>
    </source>
</evidence>
<organism>
    <name type="scientific">Staphylococcus aureus (strain MRSA252)</name>
    <dbReference type="NCBI Taxonomy" id="282458"/>
    <lineage>
        <taxon>Bacteria</taxon>
        <taxon>Bacillati</taxon>
        <taxon>Bacillota</taxon>
        <taxon>Bacilli</taxon>
        <taxon>Bacillales</taxon>
        <taxon>Staphylococcaceae</taxon>
        <taxon>Staphylococcus</taxon>
    </lineage>
</organism>
<accession>Q6GEE6</accession>
<protein>
    <recommendedName>
        <fullName evidence="1">Urease subunit gamma</fullName>
        <ecNumber evidence="1">3.5.1.5</ecNumber>
    </recommendedName>
    <alternativeName>
        <fullName evidence="1">Urea amidohydrolase subunit gamma</fullName>
    </alternativeName>
</protein>